<accession>P0A6A4</accession>
<accession>P15046</accession>
<accession>P78188</accession>
<accession>Q59386</accession>
<organism>
    <name type="scientific">Escherichia coli O6:H1 (strain CFT073 / ATCC 700928 / UPEC)</name>
    <dbReference type="NCBI Taxonomy" id="199310"/>
    <lineage>
        <taxon>Bacteria</taxon>
        <taxon>Pseudomonadati</taxon>
        <taxon>Pseudomonadota</taxon>
        <taxon>Gammaproteobacteria</taxon>
        <taxon>Enterobacterales</taxon>
        <taxon>Enterobacteriaceae</taxon>
        <taxon>Escherichia</taxon>
    </lineage>
</organism>
<gene>
    <name evidence="1" type="primary">ackA</name>
    <name type="synonym">ack</name>
    <name type="ordered locus">c2838</name>
</gene>
<feature type="chain" id="PRO_0000107559" description="Acetate kinase">
    <location>
        <begin position="1"/>
        <end position="400"/>
    </location>
</feature>
<feature type="active site" description="Proton donor/acceptor" evidence="1">
    <location>
        <position position="150"/>
    </location>
</feature>
<feature type="binding site" evidence="1">
    <location>
        <position position="10"/>
    </location>
    <ligand>
        <name>Mg(2+)</name>
        <dbReference type="ChEBI" id="CHEBI:18420"/>
    </ligand>
</feature>
<feature type="binding site" evidence="1">
    <location>
        <position position="17"/>
    </location>
    <ligand>
        <name>ATP</name>
        <dbReference type="ChEBI" id="CHEBI:30616"/>
    </ligand>
</feature>
<feature type="binding site" evidence="1">
    <location>
        <position position="91"/>
    </location>
    <ligand>
        <name>substrate</name>
    </ligand>
</feature>
<feature type="binding site" evidence="1">
    <location>
        <begin position="210"/>
        <end position="214"/>
    </location>
    <ligand>
        <name>ATP</name>
        <dbReference type="ChEBI" id="CHEBI:30616"/>
    </ligand>
</feature>
<feature type="binding site" evidence="1">
    <location>
        <begin position="285"/>
        <end position="287"/>
    </location>
    <ligand>
        <name>ATP</name>
        <dbReference type="ChEBI" id="CHEBI:30616"/>
    </ligand>
</feature>
<feature type="binding site" evidence="1">
    <location>
        <begin position="333"/>
        <end position="337"/>
    </location>
    <ligand>
        <name>ATP</name>
        <dbReference type="ChEBI" id="CHEBI:30616"/>
    </ligand>
</feature>
<feature type="binding site" evidence="1">
    <location>
        <position position="387"/>
    </location>
    <ligand>
        <name>Mg(2+)</name>
        <dbReference type="ChEBI" id="CHEBI:18420"/>
    </ligand>
</feature>
<feature type="site" description="Transition state stabilizer" evidence="1">
    <location>
        <position position="182"/>
    </location>
</feature>
<feature type="site" description="Transition state stabilizer" evidence="1">
    <location>
        <position position="243"/>
    </location>
</feature>
<keyword id="KW-0067">ATP-binding</keyword>
<keyword id="KW-0963">Cytoplasm</keyword>
<keyword id="KW-0418">Kinase</keyword>
<keyword id="KW-0460">Magnesium</keyword>
<keyword id="KW-0479">Metal-binding</keyword>
<keyword id="KW-0547">Nucleotide-binding</keyword>
<keyword id="KW-1185">Reference proteome</keyword>
<keyword id="KW-0808">Transferase</keyword>
<comment type="function">
    <text evidence="1">Catalyzes the formation of acetyl phosphate from acetate and ATP. Can also catalyze the reverse reaction.</text>
</comment>
<comment type="catalytic activity">
    <reaction evidence="1">
        <text>acetate + ATP = acetyl phosphate + ADP</text>
        <dbReference type="Rhea" id="RHEA:11352"/>
        <dbReference type="ChEBI" id="CHEBI:22191"/>
        <dbReference type="ChEBI" id="CHEBI:30089"/>
        <dbReference type="ChEBI" id="CHEBI:30616"/>
        <dbReference type="ChEBI" id="CHEBI:456216"/>
        <dbReference type="EC" id="2.7.2.1"/>
    </reaction>
</comment>
<comment type="cofactor">
    <cofactor evidence="1">
        <name>Mg(2+)</name>
        <dbReference type="ChEBI" id="CHEBI:18420"/>
    </cofactor>
    <cofactor evidence="1">
        <name>Mn(2+)</name>
        <dbReference type="ChEBI" id="CHEBI:29035"/>
    </cofactor>
    <text evidence="1">Mg(2+). Can also accept Mn(2+).</text>
</comment>
<comment type="pathway">
    <text evidence="1">Metabolic intermediate biosynthesis; acetyl-CoA biosynthesis; acetyl-CoA from acetate: step 1/2.</text>
</comment>
<comment type="subunit">
    <text evidence="1">Homodimer.</text>
</comment>
<comment type="subcellular location">
    <subcellularLocation>
        <location evidence="1">Cytoplasm</location>
    </subcellularLocation>
</comment>
<comment type="similarity">
    <text evidence="1">Belongs to the acetokinase family.</text>
</comment>
<reference key="1">
    <citation type="journal article" date="2002" name="Proc. Natl. Acad. Sci. U.S.A.">
        <title>Extensive mosaic structure revealed by the complete genome sequence of uropathogenic Escherichia coli.</title>
        <authorList>
            <person name="Welch R.A."/>
            <person name="Burland V."/>
            <person name="Plunkett G. III"/>
            <person name="Redford P."/>
            <person name="Roesch P."/>
            <person name="Rasko D."/>
            <person name="Buckles E.L."/>
            <person name="Liou S.-R."/>
            <person name="Boutin A."/>
            <person name="Hackett J."/>
            <person name="Stroud D."/>
            <person name="Mayhew G.F."/>
            <person name="Rose D.J."/>
            <person name="Zhou S."/>
            <person name="Schwartz D.C."/>
            <person name="Perna N.T."/>
            <person name="Mobley H.L.T."/>
            <person name="Donnenberg M.S."/>
            <person name="Blattner F.R."/>
        </authorList>
    </citation>
    <scope>NUCLEOTIDE SEQUENCE [LARGE SCALE GENOMIC DNA]</scope>
    <source>
        <strain>CFT073 / ATCC 700928 / UPEC</strain>
    </source>
</reference>
<name>ACKA_ECOL6</name>
<evidence type="ECO:0000255" key="1">
    <source>
        <dbReference type="HAMAP-Rule" id="MF_00020"/>
    </source>
</evidence>
<protein>
    <recommendedName>
        <fullName evidence="1">Acetate kinase</fullName>
        <ecNumber evidence="1">2.7.2.1</ecNumber>
    </recommendedName>
    <alternativeName>
        <fullName evidence="1">Acetokinase</fullName>
    </alternativeName>
</protein>
<sequence>MSSKLVLVLNCGSSSLKFAIIDAVNGEEYLSGLAECFHLPEARIKWKMDGNKQEAALGAGAAHSEALNFIVNTILAQKPELSAQLTAIGHRIVHGGEKYTSSVVIDESVIQGIKDAASFAPLHNPAHLIGIEEALKSFPQLKDKNVAVFDTAFHQTMPEESYLYALPYNLYKEHGIRRYGAHGTSHFYVTQEAAKMLNKPVEELNIITCHLGNGGSVSAIRNGKCVDTSMGLTPLEGLVMGTRSGDIDPAIIFHLHDTLGMSVDAINKLLTKESGLLGLTEVTSDCRYVEDNYATKEDAKRAMDVYCHRLAKYIGAYTALMDGRLDAVVFTGGIGENAAMVRELSLGKLGVLGFEVDHERNLAARFGKSGFINKEGTRPAVVIPTNEELVIAQDASRLTA</sequence>
<proteinExistence type="inferred from homology"/>
<dbReference type="EC" id="2.7.2.1" evidence="1"/>
<dbReference type="EMBL" id="AE014075">
    <property type="protein sequence ID" value="AAN81292.1"/>
    <property type="molecule type" value="Genomic_DNA"/>
</dbReference>
<dbReference type="RefSeq" id="WP_000095707.1">
    <property type="nucleotide sequence ID" value="NZ_CP051263.1"/>
</dbReference>
<dbReference type="SMR" id="P0A6A4"/>
<dbReference type="STRING" id="199310.c2838"/>
<dbReference type="GeneID" id="93774878"/>
<dbReference type="KEGG" id="ecc:c2838"/>
<dbReference type="eggNOG" id="COG0282">
    <property type="taxonomic scope" value="Bacteria"/>
</dbReference>
<dbReference type="HOGENOM" id="CLU_020352_0_0_6"/>
<dbReference type="BioCyc" id="ECOL199310:C2838-MONOMER"/>
<dbReference type="UniPathway" id="UPA00340">
    <property type="reaction ID" value="UER00458"/>
</dbReference>
<dbReference type="Proteomes" id="UP000001410">
    <property type="component" value="Chromosome"/>
</dbReference>
<dbReference type="GO" id="GO:0005829">
    <property type="term" value="C:cytosol"/>
    <property type="evidence" value="ECO:0007669"/>
    <property type="project" value="TreeGrafter"/>
</dbReference>
<dbReference type="GO" id="GO:0008776">
    <property type="term" value="F:acetate kinase activity"/>
    <property type="evidence" value="ECO:0007669"/>
    <property type="project" value="UniProtKB-UniRule"/>
</dbReference>
<dbReference type="GO" id="GO:0005524">
    <property type="term" value="F:ATP binding"/>
    <property type="evidence" value="ECO:0007669"/>
    <property type="project" value="UniProtKB-KW"/>
</dbReference>
<dbReference type="GO" id="GO:0000287">
    <property type="term" value="F:magnesium ion binding"/>
    <property type="evidence" value="ECO:0007669"/>
    <property type="project" value="UniProtKB-UniRule"/>
</dbReference>
<dbReference type="GO" id="GO:0006083">
    <property type="term" value="P:acetate metabolic process"/>
    <property type="evidence" value="ECO:0007669"/>
    <property type="project" value="TreeGrafter"/>
</dbReference>
<dbReference type="GO" id="GO:0006085">
    <property type="term" value="P:acetyl-CoA biosynthetic process"/>
    <property type="evidence" value="ECO:0007669"/>
    <property type="project" value="UniProtKB-UniRule"/>
</dbReference>
<dbReference type="CDD" id="cd24010">
    <property type="entry name" value="ASKHA_NBD_AcK_PK"/>
    <property type="match status" value="1"/>
</dbReference>
<dbReference type="FunFam" id="3.30.420.40:FF:000041">
    <property type="entry name" value="Acetate kinase"/>
    <property type="match status" value="1"/>
</dbReference>
<dbReference type="FunFam" id="3.30.420.40:FF:000042">
    <property type="entry name" value="Acetate kinase"/>
    <property type="match status" value="1"/>
</dbReference>
<dbReference type="Gene3D" id="3.30.420.40">
    <property type="match status" value="2"/>
</dbReference>
<dbReference type="HAMAP" id="MF_00020">
    <property type="entry name" value="Acetate_kinase"/>
    <property type="match status" value="1"/>
</dbReference>
<dbReference type="InterPro" id="IPR004372">
    <property type="entry name" value="Ac/propionate_kinase"/>
</dbReference>
<dbReference type="InterPro" id="IPR000890">
    <property type="entry name" value="Aliphatic_acid_kin_short-chain"/>
</dbReference>
<dbReference type="InterPro" id="IPR023865">
    <property type="entry name" value="Aliphatic_acid_kinase_CS"/>
</dbReference>
<dbReference type="InterPro" id="IPR043129">
    <property type="entry name" value="ATPase_NBD"/>
</dbReference>
<dbReference type="NCBIfam" id="TIGR00016">
    <property type="entry name" value="ackA"/>
    <property type="match status" value="1"/>
</dbReference>
<dbReference type="PANTHER" id="PTHR21060">
    <property type="entry name" value="ACETATE KINASE"/>
    <property type="match status" value="1"/>
</dbReference>
<dbReference type="PANTHER" id="PTHR21060:SF21">
    <property type="entry name" value="ACETATE KINASE"/>
    <property type="match status" value="1"/>
</dbReference>
<dbReference type="Pfam" id="PF00871">
    <property type="entry name" value="Acetate_kinase"/>
    <property type="match status" value="1"/>
</dbReference>
<dbReference type="PIRSF" id="PIRSF000722">
    <property type="entry name" value="Acetate_prop_kin"/>
    <property type="match status" value="1"/>
</dbReference>
<dbReference type="PRINTS" id="PR00471">
    <property type="entry name" value="ACETATEKNASE"/>
</dbReference>
<dbReference type="SUPFAM" id="SSF53067">
    <property type="entry name" value="Actin-like ATPase domain"/>
    <property type="match status" value="2"/>
</dbReference>
<dbReference type="PROSITE" id="PS01075">
    <property type="entry name" value="ACETATE_KINASE_1"/>
    <property type="match status" value="1"/>
</dbReference>
<dbReference type="PROSITE" id="PS01076">
    <property type="entry name" value="ACETATE_KINASE_2"/>
    <property type="match status" value="1"/>
</dbReference>